<reference key="1">
    <citation type="journal article" date="2008" name="DNA Res.">
        <title>Complete genome sequence and comparative analysis of the wild-type commensal Escherichia coli strain SE11 isolated from a healthy adult.</title>
        <authorList>
            <person name="Oshima K."/>
            <person name="Toh H."/>
            <person name="Ogura Y."/>
            <person name="Sasamoto H."/>
            <person name="Morita H."/>
            <person name="Park S.-H."/>
            <person name="Ooka T."/>
            <person name="Iyoda S."/>
            <person name="Taylor T.D."/>
            <person name="Hayashi T."/>
            <person name="Itoh K."/>
            <person name="Hattori M."/>
        </authorList>
    </citation>
    <scope>NUCLEOTIDE SEQUENCE [LARGE SCALE GENOMIC DNA]</scope>
    <source>
        <strain>SE11</strain>
    </source>
</reference>
<comment type="function">
    <text evidence="1">Catalyzes the stereospecific hydrolysis of the cyclic amide bond of D-hydantoin derivatives with an aromatic side chains at the 5'-position. Has no activity on dihydropyrimidines. The physiological function is unknown.</text>
</comment>
<comment type="catalytic activity">
    <reaction evidence="1">
        <text>D-5-phenylhydantoin + H2O = N-carbamoyl-D-phenylglycine + H(+)</text>
        <dbReference type="Rhea" id="RHEA:51664"/>
        <dbReference type="ChEBI" id="CHEBI:15377"/>
        <dbReference type="ChEBI" id="CHEBI:15378"/>
        <dbReference type="ChEBI" id="CHEBI:140750"/>
        <dbReference type="ChEBI" id="CHEBI:140758"/>
    </reaction>
</comment>
<comment type="cofactor">
    <cofactor evidence="1">
        <name>a divalent metal cation</name>
        <dbReference type="ChEBI" id="CHEBI:60240"/>
    </cofactor>
    <text evidence="1">Binds 2 divalent metal cations per subunit.</text>
</comment>
<comment type="subunit">
    <text evidence="1">Homotetramer.</text>
</comment>
<comment type="PTM">
    <text evidence="1">Carboxylation allows a single lysine to coordinate two divalent metal cations.</text>
</comment>
<comment type="similarity">
    <text evidence="1">Belongs to the metallo-dependent hydrolases superfamily. Hydantoinase/dihydropyrimidinase family.</text>
</comment>
<dbReference type="EC" id="3.5.2.-" evidence="1"/>
<dbReference type="EMBL" id="AP009240">
    <property type="protein sequence ID" value="BAG78661.1"/>
    <property type="molecule type" value="Genomic_DNA"/>
</dbReference>
<dbReference type="RefSeq" id="WP_001264457.1">
    <property type="nucleotide sequence ID" value="NC_011415.1"/>
</dbReference>
<dbReference type="SMR" id="B6I707"/>
<dbReference type="KEGG" id="ecy:ECSE_3137"/>
<dbReference type="HOGENOM" id="CLU_015572_2_0_6"/>
<dbReference type="Proteomes" id="UP000008199">
    <property type="component" value="Chromosome"/>
</dbReference>
<dbReference type="GO" id="GO:0005829">
    <property type="term" value="C:cytosol"/>
    <property type="evidence" value="ECO:0007669"/>
    <property type="project" value="TreeGrafter"/>
</dbReference>
<dbReference type="GO" id="GO:0016812">
    <property type="term" value="F:hydrolase activity, acting on carbon-nitrogen (but not peptide) bonds, in cyclic amides"/>
    <property type="evidence" value="ECO:0007669"/>
    <property type="project" value="UniProtKB-UniRule"/>
</dbReference>
<dbReference type="GO" id="GO:0046872">
    <property type="term" value="F:metal ion binding"/>
    <property type="evidence" value="ECO:0007669"/>
    <property type="project" value="UniProtKB-KW"/>
</dbReference>
<dbReference type="GO" id="GO:0006208">
    <property type="term" value="P:pyrimidine nucleobase catabolic process"/>
    <property type="evidence" value="ECO:0007669"/>
    <property type="project" value="InterPro"/>
</dbReference>
<dbReference type="CDD" id="cd01314">
    <property type="entry name" value="D-HYD"/>
    <property type="match status" value="1"/>
</dbReference>
<dbReference type="FunFam" id="3.20.20.140:FF:000026">
    <property type="entry name" value="D-phenylhydantoinase"/>
    <property type="match status" value="1"/>
</dbReference>
<dbReference type="Gene3D" id="3.20.20.140">
    <property type="entry name" value="Metal-dependent hydrolases"/>
    <property type="match status" value="1"/>
</dbReference>
<dbReference type="Gene3D" id="2.30.40.10">
    <property type="entry name" value="Urease, subunit C, domain 1"/>
    <property type="match status" value="1"/>
</dbReference>
<dbReference type="HAMAP" id="MF_01644">
    <property type="entry name" value="D_hydantoinase"/>
    <property type="match status" value="1"/>
</dbReference>
<dbReference type="InterPro" id="IPR006680">
    <property type="entry name" value="Amidohydro-rel"/>
</dbReference>
<dbReference type="InterPro" id="IPR023766">
    <property type="entry name" value="D_phenylhydantoinase"/>
</dbReference>
<dbReference type="InterPro" id="IPR011778">
    <property type="entry name" value="Hydantoinase/dihydroPyrase"/>
</dbReference>
<dbReference type="InterPro" id="IPR011059">
    <property type="entry name" value="Metal-dep_hydrolase_composite"/>
</dbReference>
<dbReference type="InterPro" id="IPR032466">
    <property type="entry name" value="Metal_Hydrolase"/>
</dbReference>
<dbReference type="InterPro" id="IPR050378">
    <property type="entry name" value="Metallo-dep_Hydrolases_sf"/>
</dbReference>
<dbReference type="NCBIfam" id="TIGR02033">
    <property type="entry name" value="D-hydantoinase"/>
    <property type="match status" value="1"/>
</dbReference>
<dbReference type="PANTHER" id="PTHR11647:SF1">
    <property type="entry name" value="COLLAPSIN RESPONSE MEDIATOR PROTEIN"/>
    <property type="match status" value="1"/>
</dbReference>
<dbReference type="PANTHER" id="PTHR11647">
    <property type="entry name" value="HYDRANTOINASE/DIHYDROPYRIMIDINASE FAMILY MEMBER"/>
    <property type="match status" value="1"/>
</dbReference>
<dbReference type="Pfam" id="PF01979">
    <property type="entry name" value="Amidohydro_1"/>
    <property type="match status" value="1"/>
</dbReference>
<dbReference type="SUPFAM" id="SSF51338">
    <property type="entry name" value="Composite domain of metallo-dependent hydrolases"/>
    <property type="match status" value="2"/>
</dbReference>
<dbReference type="SUPFAM" id="SSF51556">
    <property type="entry name" value="Metallo-dependent hydrolases"/>
    <property type="match status" value="1"/>
</dbReference>
<keyword id="KW-0378">Hydrolase</keyword>
<keyword id="KW-0479">Metal-binding</keyword>
<feature type="chain" id="PRO_1000186915" description="D-phenylhydantoinase">
    <location>
        <begin position="1"/>
        <end position="461"/>
    </location>
</feature>
<feature type="binding site" evidence="1">
    <location>
        <position position="59"/>
    </location>
    <ligand>
        <name>a divalent metal cation</name>
        <dbReference type="ChEBI" id="CHEBI:60240"/>
        <label>1</label>
    </ligand>
</feature>
<feature type="binding site" evidence="1">
    <location>
        <position position="61"/>
    </location>
    <ligand>
        <name>a divalent metal cation</name>
        <dbReference type="ChEBI" id="CHEBI:60240"/>
        <label>1</label>
    </ligand>
</feature>
<feature type="binding site" description="via carbamate group" evidence="1">
    <location>
        <position position="151"/>
    </location>
    <ligand>
        <name>a divalent metal cation</name>
        <dbReference type="ChEBI" id="CHEBI:60240"/>
        <label>1</label>
    </ligand>
</feature>
<feature type="binding site" description="via carbamate group" evidence="1">
    <location>
        <position position="151"/>
    </location>
    <ligand>
        <name>a divalent metal cation</name>
        <dbReference type="ChEBI" id="CHEBI:60240"/>
        <label>2</label>
    </ligand>
</feature>
<feature type="binding site" evidence="1">
    <location>
        <position position="156"/>
    </location>
    <ligand>
        <name>substrate</name>
    </ligand>
</feature>
<feature type="binding site" evidence="1">
    <location>
        <position position="182"/>
    </location>
    <ligand>
        <name>a divalent metal cation</name>
        <dbReference type="ChEBI" id="CHEBI:60240"/>
        <label>2</label>
    </ligand>
</feature>
<feature type="binding site" evidence="1">
    <location>
        <position position="239"/>
    </location>
    <ligand>
        <name>a divalent metal cation</name>
        <dbReference type="ChEBI" id="CHEBI:60240"/>
        <label>2</label>
    </ligand>
</feature>
<feature type="binding site" evidence="1">
    <location>
        <position position="286"/>
    </location>
    <ligand>
        <name>substrate</name>
    </ligand>
</feature>
<feature type="binding site" evidence="1">
    <location>
        <position position="313"/>
    </location>
    <ligand>
        <name>a divalent metal cation</name>
        <dbReference type="ChEBI" id="CHEBI:60240"/>
        <label>1</label>
    </ligand>
</feature>
<feature type="binding site" evidence="1">
    <location>
        <position position="335"/>
    </location>
    <ligand>
        <name>substrate</name>
    </ligand>
</feature>
<feature type="modified residue" description="N6-carboxylysine" evidence="1">
    <location>
        <position position="151"/>
    </location>
</feature>
<name>PHYDA_ECOSE</name>
<protein>
    <recommendedName>
        <fullName evidence="1">D-phenylhydantoinase</fullName>
        <ecNumber evidence="1">3.5.2.-</ecNumber>
    </recommendedName>
    <alternativeName>
        <fullName evidence="1">Hydantoin-utilizing enzyme HyuA</fullName>
    </alternativeName>
</protein>
<gene>
    <name evidence="1" type="primary">hyuA</name>
    <name type="ordered locus">ECSE_3137</name>
</gene>
<organism>
    <name type="scientific">Escherichia coli (strain SE11)</name>
    <dbReference type="NCBI Taxonomy" id="409438"/>
    <lineage>
        <taxon>Bacteria</taxon>
        <taxon>Pseudomonadati</taxon>
        <taxon>Pseudomonadota</taxon>
        <taxon>Gammaproteobacteria</taxon>
        <taxon>Enterobacterales</taxon>
        <taxon>Enterobacteriaceae</taxon>
        <taxon>Escherichia</taxon>
    </lineage>
</organism>
<sequence length="461" mass="51085">MRVLIKNGTVVNADGQAKQDLLIESGIVRQLGNNISPQLPYEEIDATGCYVFPGGVDVHTHFNIDVGIARSCDDFFTGTRAAVCGGTTTIIDHMGFGPNGCRLRHQLEVYRGYAAHKAVIDYSFHGVIQHINHAILDEIPMMVEEGLSSFKLYLTYQYKLNDDEVLQALRRLHESGALTTVHPENDAAIASKRAEFIAAGLTAPRYHALSRPLECEAEAIARMINLAQIAGNAPLYIVHLSNGLGLDYLRLARANHQPVWVETCPQYLLLDERSYDTEDGMKFILSPPLRNIREQDKLWCGISDGAIDVVATDHCTFSMAQRLQISKGDFSRCPNGLPGVENRMQLLFSSGVMTGRITPERFVELTSAMPARLFGLWPQKGLLAPGSDGDVVIIDPRQSQQIQHRHLHDNADYSPWEGFTCQGAIVRTLSRGETIFCDGTFTGKAGRGRFLRRKPFVPPVL</sequence>
<accession>B6I707</accession>
<proteinExistence type="inferred from homology"/>
<evidence type="ECO:0000255" key="1">
    <source>
        <dbReference type="HAMAP-Rule" id="MF_01644"/>
    </source>
</evidence>